<sequence>MNIFDELKARGLVFQTTDEAALSKALTEDMVSYYVGYDPTADSLHLGNLVLILTMKRLQMAGHKPYALVGGATGLIGDPSFKDSERSLQTKDTVTKWSGKIRSQLERFLDFENGENKAEMTNNYNWFENLTFIDFLRDVGKHFTVNYMISKDSVKSRMESGISYTEFAYQIMQGYDFYELNQLHNVTLQLGGSDQWGNMTAGTELLRRKANKQGHVITIPLITDSTGKKFGKSEGNAIWLDADKTSPYEMYQFWLNVDDADAVKMLKIFTFLSLEEIAEIEEQFEAARHERLAQKVLAREVVSLVHGKAAYEQAVKTSEILFGGGDLRQLDAKSILTGLKAAPQHQVTDDEDLTLVELLISAGIAPSKRQAREDITNGAIYINGERVQALDYVITDSDKIENRLTVIRRGKKKNFVLTY</sequence>
<proteinExistence type="inferred from homology"/>
<reference key="1">
    <citation type="journal article" date="2001" name="Genome Res.">
        <title>The complete genome sequence of the lactic acid bacterium Lactococcus lactis ssp. lactis IL1403.</title>
        <authorList>
            <person name="Bolotin A."/>
            <person name="Wincker P."/>
            <person name="Mauger S."/>
            <person name="Jaillon O."/>
            <person name="Malarme K."/>
            <person name="Weissenbach J."/>
            <person name="Ehrlich S.D."/>
            <person name="Sorokin A."/>
        </authorList>
    </citation>
    <scope>NUCLEOTIDE SEQUENCE [LARGE SCALE GENOMIC DNA]</scope>
    <source>
        <strain>IL1403</strain>
    </source>
</reference>
<dbReference type="EC" id="6.1.1.1" evidence="1"/>
<dbReference type="EMBL" id="AE005176">
    <property type="protein sequence ID" value="AAK04483.1"/>
    <property type="molecule type" value="Genomic_DNA"/>
</dbReference>
<dbReference type="PIR" id="A86673">
    <property type="entry name" value="A86673"/>
</dbReference>
<dbReference type="RefSeq" id="NP_266541.1">
    <property type="nucleotide sequence ID" value="NC_002662.1"/>
</dbReference>
<dbReference type="RefSeq" id="WP_003131599.1">
    <property type="nucleotide sequence ID" value="NC_002662.1"/>
</dbReference>
<dbReference type="SMR" id="Q9CIH5"/>
<dbReference type="PaxDb" id="272623-L0359"/>
<dbReference type="EnsemblBacteria" id="AAK04483">
    <property type="protein sequence ID" value="AAK04483"/>
    <property type="gene ID" value="L0359"/>
</dbReference>
<dbReference type="KEGG" id="lla:L0359"/>
<dbReference type="PATRIC" id="fig|272623.7.peg.419"/>
<dbReference type="eggNOG" id="COG0162">
    <property type="taxonomic scope" value="Bacteria"/>
</dbReference>
<dbReference type="HOGENOM" id="CLU_024003_0_3_9"/>
<dbReference type="OrthoDB" id="9804243at2"/>
<dbReference type="Proteomes" id="UP000002196">
    <property type="component" value="Chromosome"/>
</dbReference>
<dbReference type="GO" id="GO:0005829">
    <property type="term" value="C:cytosol"/>
    <property type="evidence" value="ECO:0007669"/>
    <property type="project" value="TreeGrafter"/>
</dbReference>
<dbReference type="GO" id="GO:0005524">
    <property type="term" value="F:ATP binding"/>
    <property type="evidence" value="ECO:0007669"/>
    <property type="project" value="UniProtKB-UniRule"/>
</dbReference>
<dbReference type="GO" id="GO:0003723">
    <property type="term" value="F:RNA binding"/>
    <property type="evidence" value="ECO:0007669"/>
    <property type="project" value="UniProtKB-KW"/>
</dbReference>
<dbReference type="GO" id="GO:0004831">
    <property type="term" value="F:tyrosine-tRNA ligase activity"/>
    <property type="evidence" value="ECO:0007669"/>
    <property type="project" value="UniProtKB-UniRule"/>
</dbReference>
<dbReference type="GO" id="GO:0006437">
    <property type="term" value="P:tyrosyl-tRNA aminoacylation"/>
    <property type="evidence" value="ECO:0007669"/>
    <property type="project" value="UniProtKB-UniRule"/>
</dbReference>
<dbReference type="CDD" id="cd00165">
    <property type="entry name" value="S4"/>
    <property type="match status" value="1"/>
</dbReference>
<dbReference type="CDD" id="cd00805">
    <property type="entry name" value="TyrRS_core"/>
    <property type="match status" value="1"/>
</dbReference>
<dbReference type="FunFam" id="1.10.240.10:FF:000001">
    <property type="entry name" value="Tyrosine--tRNA ligase"/>
    <property type="match status" value="1"/>
</dbReference>
<dbReference type="FunFam" id="3.40.50.620:FF:000008">
    <property type="entry name" value="Tyrosine--tRNA ligase"/>
    <property type="match status" value="1"/>
</dbReference>
<dbReference type="Gene3D" id="3.40.50.620">
    <property type="entry name" value="HUPs"/>
    <property type="match status" value="1"/>
</dbReference>
<dbReference type="Gene3D" id="3.10.290.10">
    <property type="entry name" value="RNA-binding S4 domain"/>
    <property type="match status" value="1"/>
</dbReference>
<dbReference type="Gene3D" id="1.10.240.10">
    <property type="entry name" value="Tyrosyl-Transfer RNA Synthetase"/>
    <property type="match status" value="1"/>
</dbReference>
<dbReference type="HAMAP" id="MF_02006">
    <property type="entry name" value="Tyr_tRNA_synth_type1"/>
    <property type="match status" value="1"/>
</dbReference>
<dbReference type="InterPro" id="IPR001412">
    <property type="entry name" value="aa-tRNA-synth_I_CS"/>
</dbReference>
<dbReference type="InterPro" id="IPR002305">
    <property type="entry name" value="aa-tRNA-synth_Ic"/>
</dbReference>
<dbReference type="InterPro" id="IPR014729">
    <property type="entry name" value="Rossmann-like_a/b/a_fold"/>
</dbReference>
<dbReference type="InterPro" id="IPR002942">
    <property type="entry name" value="S4_RNA-bd"/>
</dbReference>
<dbReference type="InterPro" id="IPR036986">
    <property type="entry name" value="S4_RNA-bd_sf"/>
</dbReference>
<dbReference type="InterPro" id="IPR054608">
    <property type="entry name" value="SYY-like_C"/>
</dbReference>
<dbReference type="InterPro" id="IPR002307">
    <property type="entry name" value="Tyr-tRNA-ligase"/>
</dbReference>
<dbReference type="InterPro" id="IPR024088">
    <property type="entry name" value="Tyr-tRNA-ligase_bac-type"/>
</dbReference>
<dbReference type="InterPro" id="IPR024107">
    <property type="entry name" value="Tyr-tRNA-ligase_bac_1"/>
</dbReference>
<dbReference type="NCBIfam" id="TIGR00234">
    <property type="entry name" value="tyrS"/>
    <property type="match status" value="1"/>
</dbReference>
<dbReference type="PANTHER" id="PTHR11766:SF0">
    <property type="entry name" value="TYROSINE--TRNA LIGASE, MITOCHONDRIAL"/>
    <property type="match status" value="1"/>
</dbReference>
<dbReference type="PANTHER" id="PTHR11766">
    <property type="entry name" value="TYROSYL-TRNA SYNTHETASE"/>
    <property type="match status" value="1"/>
</dbReference>
<dbReference type="Pfam" id="PF22421">
    <property type="entry name" value="SYY_C-terminal"/>
    <property type="match status" value="1"/>
</dbReference>
<dbReference type="Pfam" id="PF00579">
    <property type="entry name" value="tRNA-synt_1b"/>
    <property type="match status" value="1"/>
</dbReference>
<dbReference type="PRINTS" id="PR01040">
    <property type="entry name" value="TRNASYNTHTYR"/>
</dbReference>
<dbReference type="SMART" id="SM00363">
    <property type="entry name" value="S4"/>
    <property type="match status" value="1"/>
</dbReference>
<dbReference type="SUPFAM" id="SSF55174">
    <property type="entry name" value="Alpha-L RNA-binding motif"/>
    <property type="match status" value="1"/>
</dbReference>
<dbReference type="SUPFAM" id="SSF52374">
    <property type="entry name" value="Nucleotidylyl transferase"/>
    <property type="match status" value="1"/>
</dbReference>
<dbReference type="PROSITE" id="PS00178">
    <property type="entry name" value="AA_TRNA_LIGASE_I"/>
    <property type="match status" value="1"/>
</dbReference>
<dbReference type="PROSITE" id="PS50889">
    <property type="entry name" value="S4"/>
    <property type="match status" value="1"/>
</dbReference>
<accession>Q9CIH5</accession>
<name>SYY_LACLA</name>
<gene>
    <name evidence="1" type="primary">tyrS</name>
    <name type="ordered locus">LL0385</name>
    <name type="ORF">L0359</name>
</gene>
<protein>
    <recommendedName>
        <fullName evidence="1">Tyrosine--tRNA ligase</fullName>
        <ecNumber evidence="1">6.1.1.1</ecNumber>
    </recommendedName>
    <alternativeName>
        <fullName evidence="1">Tyrosyl-tRNA synthetase</fullName>
        <shortName evidence="1">TyrRS</shortName>
    </alternativeName>
</protein>
<organism>
    <name type="scientific">Lactococcus lactis subsp. lactis (strain IL1403)</name>
    <name type="common">Streptococcus lactis</name>
    <dbReference type="NCBI Taxonomy" id="272623"/>
    <lineage>
        <taxon>Bacteria</taxon>
        <taxon>Bacillati</taxon>
        <taxon>Bacillota</taxon>
        <taxon>Bacilli</taxon>
        <taxon>Lactobacillales</taxon>
        <taxon>Streptococcaceae</taxon>
        <taxon>Lactococcus</taxon>
    </lineage>
</organism>
<keyword id="KW-0030">Aminoacyl-tRNA synthetase</keyword>
<keyword id="KW-0067">ATP-binding</keyword>
<keyword id="KW-0963">Cytoplasm</keyword>
<keyword id="KW-0436">Ligase</keyword>
<keyword id="KW-0547">Nucleotide-binding</keyword>
<keyword id="KW-0648">Protein biosynthesis</keyword>
<keyword id="KW-1185">Reference proteome</keyword>
<keyword id="KW-0694">RNA-binding</keyword>
<comment type="function">
    <text evidence="1">Catalyzes the attachment of tyrosine to tRNA(Tyr) in a two-step reaction: tyrosine is first activated by ATP to form Tyr-AMP and then transferred to the acceptor end of tRNA(Tyr).</text>
</comment>
<comment type="catalytic activity">
    <reaction evidence="1">
        <text>tRNA(Tyr) + L-tyrosine + ATP = L-tyrosyl-tRNA(Tyr) + AMP + diphosphate + H(+)</text>
        <dbReference type="Rhea" id="RHEA:10220"/>
        <dbReference type="Rhea" id="RHEA-COMP:9706"/>
        <dbReference type="Rhea" id="RHEA-COMP:9707"/>
        <dbReference type="ChEBI" id="CHEBI:15378"/>
        <dbReference type="ChEBI" id="CHEBI:30616"/>
        <dbReference type="ChEBI" id="CHEBI:33019"/>
        <dbReference type="ChEBI" id="CHEBI:58315"/>
        <dbReference type="ChEBI" id="CHEBI:78442"/>
        <dbReference type="ChEBI" id="CHEBI:78536"/>
        <dbReference type="ChEBI" id="CHEBI:456215"/>
        <dbReference type="EC" id="6.1.1.1"/>
    </reaction>
</comment>
<comment type="subunit">
    <text evidence="1">Homodimer.</text>
</comment>
<comment type="subcellular location">
    <subcellularLocation>
        <location evidence="1">Cytoplasm</location>
    </subcellularLocation>
</comment>
<comment type="similarity">
    <text evidence="1">Belongs to the class-I aminoacyl-tRNA synthetase family. TyrS type 1 subfamily.</text>
</comment>
<feature type="chain" id="PRO_0000234720" description="Tyrosine--tRNA ligase">
    <location>
        <begin position="1"/>
        <end position="419"/>
    </location>
</feature>
<feature type="domain" description="S4 RNA-binding" evidence="1">
    <location>
        <begin position="353"/>
        <end position="419"/>
    </location>
</feature>
<feature type="short sequence motif" description="'HIGH' region">
    <location>
        <begin position="39"/>
        <end position="48"/>
    </location>
</feature>
<feature type="short sequence motif" description="'KMSKS' region">
    <location>
        <begin position="229"/>
        <end position="233"/>
    </location>
</feature>
<feature type="binding site" evidence="1">
    <location>
        <position position="34"/>
    </location>
    <ligand>
        <name>L-tyrosine</name>
        <dbReference type="ChEBI" id="CHEBI:58315"/>
    </ligand>
</feature>
<feature type="binding site" evidence="1">
    <location>
        <position position="169"/>
    </location>
    <ligand>
        <name>L-tyrosine</name>
        <dbReference type="ChEBI" id="CHEBI:58315"/>
    </ligand>
</feature>
<feature type="binding site" evidence="1">
    <location>
        <position position="173"/>
    </location>
    <ligand>
        <name>L-tyrosine</name>
        <dbReference type="ChEBI" id="CHEBI:58315"/>
    </ligand>
</feature>
<feature type="binding site" evidence="1">
    <location>
        <position position="232"/>
    </location>
    <ligand>
        <name>ATP</name>
        <dbReference type="ChEBI" id="CHEBI:30616"/>
    </ligand>
</feature>
<evidence type="ECO:0000255" key="1">
    <source>
        <dbReference type="HAMAP-Rule" id="MF_02006"/>
    </source>
</evidence>